<reference evidence="12" key="1">
    <citation type="journal article" date="1998" name="Science">
        <title>Genome sequence of the nematode C. elegans: a platform for investigating biology.</title>
        <authorList>
            <consortium name="The C. elegans sequencing consortium"/>
        </authorList>
    </citation>
    <scope>NUCLEOTIDE SEQUENCE [LARGE SCALE GENOMIC DNA]</scope>
    <source>
        <strain evidence="12">Bristol N2</strain>
    </source>
</reference>
<reference evidence="11" key="2">
    <citation type="journal article" date="2010" name="J. Biol. Chem.">
        <title>Contribution of the peroxisomal acox gene to the dynamic balance of daumone production in Caenorhabditis elegans.</title>
        <authorList>
            <person name="Joo H.J."/>
            <person name="Kim K.Y."/>
            <person name="Yim Y.H."/>
            <person name="Jin Y.X."/>
            <person name="Kim H."/>
            <person name="Kim M.Y."/>
            <person name="Paik Y.K."/>
        </authorList>
    </citation>
    <scope>FUNCTION</scope>
    <scope>DISRUPTION PHENOTYPE</scope>
</reference>
<reference evidence="11" key="3">
    <citation type="journal article" date="2015" name="Proc. Natl. Acad. Sci. U.S.A.">
        <title>Acyl-CoA oxidase complexes control the chemical message produced by Caenorhabditis elegans.</title>
        <authorList>
            <person name="Zhang X."/>
            <person name="Feng L."/>
            <person name="Chinta S."/>
            <person name="Singh P."/>
            <person name="Wang Y."/>
            <person name="Nunnery J.K."/>
            <person name="Butcher R.A."/>
        </authorList>
    </citation>
    <scope>FUNCTION</scope>
    <scope>CATALYTIC ACTIVITY</scope>
    <scope>BIOPHYSICOCHEMICAL PROPERTIES</scope>
    <scope>PATHWAY</scope>
    <scope>INTERACTION WITH ACOX-1.1</scope>
    <scope>INDUCTION</scope>
</reference>
<reference evidence="11" key="4">
    <citation type="journal article" date="2018" name="ACS Chem. Biol.">
        <title>Acyl-CoA Oxidases Fine-Tune the Production of Ascaroside Pheromones with Specific Side Chain Lengths.</title>
        <authorList>
            <person name="Zhang X."/>
            <person name="Wang Y."/>
            <person name="Perez D.H."/>
            <person name="Jones Lipinski R.A."/>
            <person name="Butcher R.A."/>
        </authorList>
    </citation>
    <scope>FUNCTION</scope>
</reference>
<comment type="function">
    <text evidence="7 8 9">Involved in the first step of peroxisomal beta-oxidation by catalyzing the desaturation of fatty acid-derived side chains of ascaroside pheromones, which regulates development and behavior (PubMed:20610393, PubMed:25775534, PubMed:29537254). Specifically, shortens ascarosides with a 7-carbon side chain (asc-C7) (PubMed:25775534, PubMed:29537254). Does not catalyze the desaturation of fatty acids or hydroxylated fatty acids (PubMed:25775534, PubMed:29537254). Involved in the biosynthesis of asc-C6-MK (daumone 2) and asc-delta-C9 (daumone 3) but not asc-C7 (daumone 1); daumones are pheromones produced during unfavourable growth conditions which promote entry into the dauer stage (PubMed:20610393).</text>
</comment>
<comment type="catalytic activity">
    <reaction evidence="8">
        <text>asc-C7-CoA + O2 = asc-DeltaC7-CoA + H2O2</text>
        <dbReference type="Rhea" id="RHEA:66216"/>
        <dbReference type="ChEBI" id="CHEBI:15379"/>
        <dbReference type="ChEBI" id="CHEBI:16240"/>
        <dbReference type="ChEBI" id="CHEBI:139646"/>
        <dbReference type="ChEBI" id="CHEBI:139712"/>
    </reaction>
</comment>
<comment type="cofactor">
    <cofactor evidence="1">
        <name>FAD</name>
        <dbReference type="ChEBI" id="CHEBI:57692"/>
    </cofactor>
</comment>
<comment type="activity regulation">
    <text evidence="2">Activated by ATP (By similarity). ATP binding leads to a conformational change that promotes FAD cofactor binding and enzyme activity (By similarity). ATP binding likely occurs during acox-1.3 folding and/or dimer formation (By similarity).</text>
</comment>
<comment type="biophysicochemical properties">
    <kinetics>
        <KM evidence="8">60 uM for asc-C7-CoA (at 30 degrees Celsius, pH 7.4 and in complex with acox-1.1)</KM>
        <text evidence="8">kcat is 144 sec(-1) with asc-C7-CoA (at 30 degrees Celsius, pH 7.4 and in complex with acox-1.1).</text>
    </kinetics>
</comment>
<comment type="pathway">
    <text evidence="8">Lipid metabolism; peroxisomal fatty acid beta-oxidation.</text>
</comment>
<comment type="subunit">
    <text evidence="8">Forms a heterodimer with acox-1.1; the interaction may be important for the stability of acox-1.3.</text>
</comment>
<comment type="subcellular location">
    <subcellularLocation>
        <location evidence="2">Peroxisome</location>
    </subcellularLocation>
</comment>
<comment type="induction">
    <text evidence="7 8">Induced by high temperatures (25 degrees Celsius) (PubMed:20610393). Induced by starvation (PubMed:25775534).</text>
</comment>
<comment type="disruption phenotype">
    <text evidence="7">RNAi-mediated knockdown abolishes production of dauer pheromone daumone 2, severely reduces production of daumone 3 and increases production of daumone 1.</text>
</comment>
<comment type="similarity">
    <text evidence="4">Belongs to the acyl-CoA oxidase family.</text>
</comment>
<sequence length="660" mass="74781">MSSICKGDNSDLTEERKNATFDTDKMAAVIYGREEIASRRRQLTESISRIHELAESKPLVFMTREEKIAESCRKLEVLSRHWNQTPFNRDNEEDALHIYREVLGMEGHPLALHDTMFIPTLVAQASQEQQEKWLGRARRKEIIGCYAQTEMGHGTNLRKLETTATYSPDTQEFILNTPTITALKWWPGALGKSSNNAIVVANLLIKDQNYGPHPFMVQLRDEKTHIPLKGIVVGDIGPKMAFNGADNGYLGFNNHRIPRTNLLMRHTKVEANGTYIKPSHAKIGYSSMVKVRSRMAMDQGLFLASALVIAVRYSAVRRQGFLEDKTQKVKVLDYQTQQHRLFPSLARAYAFIFTGFETIHLYSQLLKDVDMGNTSGMADLHALTSGLKSVVTHQTGEGIEQARMACGEHGYSMASYISEIYGVAIGGCTYEGENMVMLLQLARYLVKSVELIKSGEEKKLGPMVSYLAAKGGHPDLSSLNGYVTAFEHMARRQAWKATEKFLKLMETGESREVAWNKSAVELTRASRLHTRLFIIEAFMRRVSRIEDIPVKEVLTDLLHLHVNYELLDVATYALEFMSSTQLDYIRDQLYLYLEKIRPSAVSLVDSFQISDMQLRSVLGRRDGNVYENLFKWAKSSPLNKSDVLPSVDKYLKPMMEKAKL</sequence>
<gene>
    <name evidence="13" type="primary">acox-1.3</name>
    <name evidence="10 13" type="synonym">acox-3</name>
    <name evidence="13" type="ORF">F08A8.3</name>
</gene>
<accession>O62138</accession>
<organism evidence="12">
    <name type="scientific">Caenorhabditis elegans</name>
    <dbReference type="NCBI Taxonomy" id="6239"/>
    <lineage>
        <taxon>Eukaryota</taxon>
        <taxon>Metazoa</taxon>
        <taxon>Ecdysozoa</taxon>
        <taxon>Nematoda</taxon>
        <taxon>Chromadorea</taxon>
        <taxon>Rhabditida</taxon>
        <taxon>Rhabditina</taxon>
        <taxon>Rhabditomorpha</taxon>
        <taxon>Rhabditoidea</taxon>
        <taxon>Rhabditidae</taxon>
        <taxon>Peloderinae</taxon>
        <taxon>Caenorhabditis</taxon>
    </lineage>
</organism>
<name>ACX13_CAEEL</name>
<protein>
    <recommendedName>
        <fullName evidence="11">Acyl-coenzyme A oxidase acox-1.3</fullName>
        <ecNumber evidence="8">1.3.3.-</ecNumber>
    </recommendedName>
</protein>
<dbReference type="EC" id="1.3.3.-" evidence="8"/>
<dbReference type="EMBL" id="BX284601">
    <property type="protein sequence ID" value="CAB16865.1"/>
    <property type="molecule type" value="Genomic_DNA"/>
</dbReference>
<dbReference type="PIR" id="T20569">
    <property type="entry name" value="T20569"/>
</dbReference>
<dbReference type="RefSeq" id="NP_493263.1">
    <property type="nucleotide sequence ID" value="NM_060862.3"/>
</dbReference>
<dbReference type="SMR" id="O62138"/>
<dbReference type="FunCoup" id="O62138">
    <property type="interactions" value="1624"/>
</dbReference>
<dbReference type="STRING" id="6239.F08A8.3.1"/>
<dbReference type="PaxDb" id="6239-F08A8.3"/>
<dbReference type="PeptideAtlas" id="O62138"/>
<dbReference type="EnsemblMetazoa" id="F08A8.3.1">
    <property type="protein sequence ID" value="F08A8.3.1"/>
    <property type="gene ID" value="WBGene00008566"/>
</dbReference>
<dbReference type="GeneID" id="184167"/>
<dbReference type="KEGG" id="cel:CELE_F08A8.3"/>
<dbReference type="UCSC" id="F08A8.3">
    <property type="organism name" value="c. elegans"/>
</dbReference>
<dbReference type="AGR" id="WB:WBGene00008566"/>
<dbReference type="CTD" id="184167"/>
<dbReference type="WormBase" id="F08A8.3">
    <property type="protein sequence ID" value="CE17635"/>
    <property type="gene ID" value="WBGene00008566"/>
    <property type="gene designation" value="acox-1.3"/>
</dbReference>
<dbReference type="eggNOG" id="KOG0136">
    <property type="taxonomic scope" value="Eukaryota"/>
</dbReference>
<dbReference type="GeneTree" id="ENSGT00940000168827"/>
<dbReference type="HOGENOM" id="CLU_014629_3_1_1"/>
<dbReference type="InParanoid" id="O62138"/>
<dbReference type="OMA" id="TFPTQEL"/>
<dbReference type="OrthoDB" id="538336at2759"/>
<dbReference type="PhylomeDB" id="O62138"/>
<dbReference type="BRENDA" id="1.3.3.6">
    <property type="organism ID" value="1045"/>
</dbReference>
<dbReference type="Reactome" id="R-CEL-193368">
    <property type="pathway name" value="Synthesis of bile acids and bile salts via 7alpha-hydroxycholesterol"/>
</dbReference>
<dbReference type="Reactome" id="R-CEL-2046106">
    <property type="pathway name" value="alpha-linolenic acid (ALA) metabolism"/>
</dbReference>
<dbReference type="Reactome" id="R-CEL-389887">
    <property type="pathway name" value="Beta-oxidation of pristanoyl-CoA"/>
</dbReference>
<dbReference type="Reactome" id="R-CEL-390247">
    <property type="pathway name" value="Beta-oxidation of very long chain fatty acids"/>
</dbReference>
<dbReference type="Reactome" id="R-CEL-9033241">
    <property type="pathway name" value="Peroxisomal protein import"/>
</dbReference>
<dbReference type="UniPathway" id="UPA00661"/>
<dbReference type="PRO" id="PR:O62138"/>
<dbReference type="Proteomes" id="UP000001940">
    <property type="component" value="Chromosome I"/>
</dbReference>
<dbReference type="Bgee" id="WBGene00008566">
    <property type="expression patterns" value="Expressed in larva and 2 other cell types or tissues"/>
</dbReference>
<dbReference type="GO" id="GO:0005777">
    <property type="term" value="C:peroxisome"/>
    <property type="evidence" value="ECO:0000318"/>
    <property type="project" value="GO_Central"/>
</dbReference>
<dbReference type="GO" id="GO:0003997">
    <property type="term" value="F:acyl-CoA oxidase activity"/>
    <property type="evidence" value="ECO:0000318"/>
    <property type="project" value="GO_Central"/>
</dbReference>
<dbReference type="GO" id="GO:0005524">
    <property type="term" value="F:ATP binding"/>
    <property type="evidence" value="ECO:0007669"/>
    <property type="project" value="UniProtKB-KW"/>
</dbReference>
<dbReference type="GO" id="GO:0071949">
    <property type="term" value="F:FAD binding"/>
    <property type="evidence" value="ECO:0007669"/>
    <property type="project" value="InterPro"/>
</dbReference>
<dbReference type="GO" id="GO:0005504">
    <property type="term" value="F:fatty acid binding"/>
    <property type="evidence" value="ECO:0000318"/>
    <property type="project" value="GO_Central"/>
</dbReference>
<dbReference type="GO" id="GO:0050660">
    <property type="term" value="F:flavin adenine dinucleotide binding"/>
    <property type="evidence" value="ECO:0000318"/>
    <property type="project" value="GO_Central"/>
</dbReference>
<dbReference type="GO" id="GO:1904070">
    <property type="term" value="P:ascaroside biosynthetic process"/>
    <property type="evidence" value="ECO:0000315"/>
    <property type="project" value="UniProtKB"/>
</dbReference>
<dbReference type="GO" id="GO:0033540">
    <property type="term" value="P:fatty acid beta-oxidation using acyl-CoA oxidase"/>
    <property type="evidence" value="ECO:0000318"/>
    <property type="project" value="GO_Central"/>
</dbReference>
<dbReference type="GO" id="GO:0042811">
    <property type="term" value="P:pheromone biosynthetic process"/>
    <property type="evidence" value="ECO:0000315"/>
    <property type="project" value="UniProtKB"/>
</dbReference>
<dbReference type="FunFam" id="1.10.540.10:FF:000006">
    <property type="entry name" value="Acyl-coenzyme A oxidase"/>
    <property type="match status" value="1"/>
</dbReference>
<dbReference type="FunFam" id="1.20.140.10:FF:000005">
    <property type="entry name" value="Acyl-coenzyme A oxidase"/>
    <property type="match status" value="1"/>
</dbReference>
<dbReference type="FunFam" id="1.20.140.10:FF:000013">
    <property type="entry name" value="Acyl-coenzyme A oxidase"/>
    <property type="match status" value="1"/>
</dbReference>
<dbReference type="FunFam" id="2.40.110.10:FF:000003">
    <property type="entry name" value="Acyl-coenzyme A oxidase"/>
    <property type="match status" value="1"/>
</dbReference>
<dbReference type="Gene3D" id="1.10.540.10">
    <property type="entry name" value="Acyl-CoA dehydrogenase/oxidase, N-terminal domain"/>
    <property type="match status" value="1"/>
</dbReference>
<dbReference type="Gene3D" id="2.40.110.10">
    <property type="entry name" value="Butyryl-CoA Dehydrogenase, subunit A, domain 2"/>
    <property type="match status" value="1"/>
</dbReference>
<dbReference type="Gene3D" id="1.20.140.10">
    <property type="entry name" value="Butyryl-CoA Dehydrogenase, subunit A, domain 3"/>
    <property type="match status" value="2"/>
</dbReference>
<dbReference type="InterPro" id="IPR055060">
    <property type="entry name" value="ACOX_C_alpha1"/>
</dbReference>
<dbReference type="InterPro" id="IPR029320">
    <property type="entry name" value="Acyl-CoA_ox_N"/>
</dbReference>
<dbReference type="InterPro" id="IPR046373">
    <property type="entry name" value="Acyl-CoA_Oxase/DH_mid-dom_sf"/>
</dbReference>
<dbReference type="InterPro" id="IPR012258">
    <property type="entry name" value="Acyl-CoA_oxidase"/>
</dbReference>
<dbReference type="InterPro" id="IPR002655">
    <property type="entry name" value="Acyl-CoA_oxidase_C"/>
</dbReference>
<dbReference type="InterPro" id="IPR036250">
    <property type="entry name" value="AcylCo_DH-like_C"/>
</dbReference>
<dbReference type="InterPro" id="IPR037069">
    <property type="entry name" value="AcylCoA_DH/ox_N_sf"/>
</dbReference>
<dbReference type="InterPro" id="IPR009100">
    <property type="entry name" value="AcylCoA_DH/oxidase_NM_dom_sf"/>
</dbReference>
<dbReference type="PANTHER" id="PTHR10909">
    <property type="entry name" value="ELECTRON TRANSPORT OXIDOREDUCTASE"/>
    <property type="match status" value="1"/>
</dbReference>
<dbReference type="PANTHER" id="PTHR10909:SF250">
    <property type="entry name" value="PEROXISOMAL ACYL-COENZYME A OXIDASE 1"/>
    <property type="match status" value="1"/>
</dbReference>
<dbReference type="Pfam" id="PF01756">
    <property type="entry name" value="ACOX"/>
    <property type="match status" value="1"/>
</dbReference>
<dbReference type="Pfam" id="PF22924">
    <property type="entry name" value="ACOX_C_alpha1"/>
    <property type="match status" value="1"/>
</dbReference>
<dbReference type="Pfam" id="PF14749">
    <property type="entry name" value="Acyl-CoA_ox_N"/>
    <property type="match status" value="1"/>
</dbReference>
<dbReference type="PIRSF" id="PIRSF000168">
    <property type="entry name" value="Acyl-CoA_oxidase"/>
    <property type="match status" value="1"/>
</dbReference>
<dbReference type="SUPFAM" id="SSF47203">
    <property type="entry name" value="Acyl-CoA dehydrogenase C-terminal domain-like"/>
    <property type="match status" value="2"/>
</dbReference>
<dbReference type="SUPFAM" id="SSF56645">
    <property type="entry name" value="Acyl-CoA dehydrogenase NM domain-like"/>
    <property type="match status" value="1"/>
</dbReference>
<keyword id="KW-0067">ATP-binding</keyword>
<keyword id="KW-0274">FAD</keyword>
<keyword id="KW-0276">Fatty acid metabolism</keyword>
<keyword id="KW-0285">Flavoprotein</keyword>
<keyword id="KW-0443">Lipid metabolism</keyword>
<keyword id="KW-0547">Nucleotide-binding</keyword>
<keyword id="KW-0560">Oxidoreductase</keyword>
<keyword id="KW-0576">Peroxisome</keyword>
<keyword id="KW-1185">Reference proteome</keyword>
<proteinExistence type="evidence at protein level"/>
<evidence type="ECO:0000250" key="1">
    <source>
        <dbReference type="UniProtKB" id="O62137"/>
    </source>
</evidence>
<evidence type="ECO:0000250" key="2">
    <source>
        <dbReference type="UniProtKB" id="O62140"/>
    </source>
</evidence>
<evidence type="ECO:0000255" key="3"/>
<evidence type="ECO:0000255" key="4">
    <source>
        <dbReference type="PIRNR" id="PIRNR000168"/>
    </source>
</evidence>
<evidence type="ECO:0000255" key="5">
    <source>
        <dbReference type="PIRSR" id="PIRSR000168-1"/>
    </source>
</evidence>
<evidence type="ECO:0000255" key="6">
    <source>
        <dbReference type="PIRSR" id="PIRSR000168-2"/>
    </source>
</evidence>
<evidence type="ECO:0000269" key="7">
    <source>
    </source>
</evidence>
<evidence type="ECO:0000269" key="8">
    <source>
    </source>
</evidence>
<evidence type="ECO:0000269" key="9">
    <source>
    </source>
</evidence>
<evidence type="ECO:0000303" key="10">
    <source>
    </source>
</evidence>
<evidence type="ECO:0000305" key="11"/>
<evidence type="ECO:0000312" key="12">
    <source>
        <dbReference type="Proteomes" id="UP000001940"/>
    </source>
</evidence>
<evidence type="ECO:0000312" key="13">
    <source>
        <dbReference type="WormBase" id="F08A8.3"/>
    </source>
</evidence>
<feature type="chain" id="PRO_0000452304" description="Acyl-coenzyme A oxidase acox-1.3">
    <location>
        <begin position="1"/>
        <end position="660"/>
    </location>
</feature>
<feature type="short sequence motif" description="Microbody targeting signal" evidence="3">
    <location>
        <begin position="658"/>
        <end position="660"/>
    </location>
</feature>
<feature type="active site" description="Proton acceptor" evidence="5">
    <location>
        <position position="431"/>
    </location>
</feature>
<feature type="binding site" description="in other chain" evidence="2">
    <location>
        <begin position="146"/>
        <end position="149"/>
    </location>
    <ligand>
        <name>FAD</name>
        <dbReference type="ChEBI" id="CHEBI:57692"/>
        <note>ligand shared between dimeric partners</note>
    </ligand>
</feature>
<feature type="binding site" description="in other chain" evidence="2">
    <location>
        <begin position="154"/>
        <end position="155"/>
    </location>
    <ligand>
        <name>FAD</name>
        <dbReference type="ChEBI" id="CHEBI:57692"/>
        <note>ligand shared between dimeric partners</note>
    </ligand>
</feature>
<feature type="binding site" description="in other chain" evidence="2 6">
    <location>
        <position position="188"/>
    </location>
    <ligand>
        <name>FAD</name>
        <dbReference type="ChEBI" id="CHEBI:57692"/>
        <note>ligand shared between dimeric partners</note>
    </ligand>
</feature>
<feature type="binding site" evidence="1">
    <location>
        <begin position="282"/>
        <end position="285"/>
    </location>
    <ligand>
        <name>substrate</name>
    </ligand>
</feature>
<feature type="binding site" evidence="1">
    <location>
        <position position="292"/>
    </location>
    <ligand>
        <name>substrate</name>
    </ligand>
</feature>
<feature type="binding site" evidence="2">
    <location>
        <position position="317"/>
    </location>
    <ligand>
        <name>FAD</name>
        <dbReference type="ChEBI" id="CHEBI:57692"/>
        <note>ligand shared between dimeric partners</note>
    </ligand>
</feature>
<feature type="binding site" evidence="2">
    <location>
        <begin position="337"/>
        <end position="340"/>
    </location>
    <ligand>
        <name>FAD</name>
        <dbReference type="ChEBI" id="CHEBI:57692"/>
        <note>ligand shared between dimeric partners</note>
    </ligand>
</feature>
<feature type="binding site" evidence="1">
    <location>
        <position position="339"/>
    </location>
    <ligand>
        <name>ATP</name>
        <dbReference type="ChEBI" id="CHEBI:30616"/>
        <note>ligand shared between dimeric partners</note>
    </ligand>
</feature>
<feature type="binding site" description="in other chain" evidence="2">
    <location>
        <position position="389"/>
    </location>
    <ligand>
        <name>ATP</name>
        <dbReference type="ChEBI" id="CHEBI:30616"/>
        <note>ligand shared between dimeric partners</note>
    </ligand>
</feature>
<feature type="binding site" description="in other chain" evidence="2">
    <location>
        <position position="393"/>
    </location>
    <ligand>
        <name>ATP</name>
        <dbReference type="ChEBI" id="CHEBI:30616"/>
        <note>ligand shared between dimeric partners</note>
    </ligand>
</feature>
<feature type="binding site" evidence="2">
    <location>
        <position position="401"/>
    </location>
    <ligand>
        <name>ATP</name>
        <dbReference type="ChEBI" id="CHEBI:30616"/>
        <note>ligand shared between dimeric partners</note>
    </ligand>
</feature>
<feature type="binding site" evidence="1">
    <location>
        <begin position="430"/>
        <end position="431"/>
    </location>
    <ligand>
        <name>substrate</name>
    </ligand>
</feature>
<feature type="binding site" description="in other chain" evidence="1">
    <location>
        <position position="433"/>
    </location>
    <ligand>
        <name>FAD</name>
        <dbReference type="ChEBI" id="CHEBI:57692"/>
        <note>ligand shared between dimeric partners</note>
    </ligand>
</feature>
<feature type="binding site" description="in other chain" evidence="2">
    <location>
        <begin position="524"/>
        <end position="527"/>
    </location>
    <ligand>
        <name>ATP</name>
        <dbReference type="ChEBI" id="CHEBI:30616"/>
        <note>ligand shared between dimeric partners</note>
    </ligand>
</feature>
<feature type="binding site" description="in other chain" evidence="2">
    <location>
        <position position="572"/>
    </location>
    <ligand>
        <name>ATP</name>
        <dbReference type="ChEBI" id="CHEBI:30616"/>
        <note>ligand shared between dimeric partners</note>
    </ligand>
</feature>